<organism>
    <name type="scientific">Trypanosoma brucei brucei</name>
    <dbReference type="NCBI Taxonomy" id="5702"/>
    <lineage>
        <taxon>Eukaryota</taxon>
        <taxon>Discoba</taxon>
        <taxon>Euglenozoa</taxon>
        <taxon>Kinetoplastea</taxon>
        <taxon>Metakinetoplastina</taxon>
        <taxon>Trypanosomatida</taxon>
        <taxon>Trypanosomatidae</taxon>
        <taxon>Trypanosoma</taxon>
    </lineage>
</organism>
<reference key="1">
    <citation type="journal article" date="1988" name="J. Mol. Biol.">
        <title>Evidence for gene conversion between the phosphoglycerate kinase genes of Trypanosoma brucei.</title>
        <authorList>
            <person name="le Blancq S.M."/>
            <person name="Swinkels B.W."/>
            <person name="Gibson W.C."/>
            <person name="Borst P."/>
        </authorList>
    </citation>
    <scope>NUCLEOTIDE SEQUENCE [GENOMIC DNA]</scope>
</reference>
<accession>P08893</accession>
<protein>
    <recommendedName>
        <fullName>Phosphoglycerate kinase, cytosolic</fullName>
        <ecNumber evidence="1">2.7.2.3</ecNumber>
    </recommendedName>
    <alternativeName>
        <fullName>PGK B allele 4</fullName>
    </alternativeName>
    <alternativeName>
        <fullName>Phosphoglycerate kinase B</fullName>
    </alternativeName>
</protein>
<evidence type="ECO:0000250" key="1">
    <source>
        <dbReference type="UniProtKB" id="P00558"/>
    </source>
</evidence>
<evidence type="ECO:0000250" key="2">
    <source>
        <dbReference type="UniProtKB" id="P07378"/>
    </source>
</evidence>
<evidence type="ECO:0000250" key="3">
    <source>
        <dbReference type="UniProtKB" id="Q7SIB7"/>
    </source>
</evidence>
<evidence type="ECO:0000305" key="4"/>
<proteinExistence type="inferred from homology"/>
<comment type="catalytic activity">
    <reaction evidence="1">
        <text>(2R)-3-phosphoglycerate + ATP = (2R)-3-phospho-glyceroyl phosphate + ADP</text>
        <dbReference type="Rhea" id="RHEA:14801"/>
        <dbReference type="ChEBI" id="CHEBI:30616"/>
        <dbReference type="ChEBI" id="CHEBI:57604"/>
        <dbReference type="ChEBI" id="CHEBI:58272"/>
        <dbReference type="ChEBI" id="CHEBI:456216"/>
        <dbReference type="EC" id="2.7.2.3"/>
    </reaction>
</comment>
<comment type="cofactor">
    <cofactor evidence="2">
        <name>Mg(2+)</name>
        <dbReference type="ChEBI" id="CHEBI:18420"/>
    </cofactor>
</comment>
<comment type="pathway">
    <text>Carbohydrate degradation; glycolysis; pyruvate from D-glyceraldehyde 3-phosphate: step 2/5.</text>
</comment>
<comment type="subunit">
    <text>Monomer.</text>
</comment>
<comment type="subcellular location">
    <subcellularLocation>
        <location>Cytoplasm</location>
    </subcellularLocation>
</comment>
<comment type="miscellaneous">
    <text>In T.brucei, three genes code for phosphoglycerate kinase isozymes, which are transported to different cell compartments.</text>
</comment>
<comment type="similarity">
    <text evidence="4">Belongs to the phosphoglycerate kinase family.</text>
</comment>
<feature type="chain" id="PRO_0000145865" description="Phosphoglycerate kinase, cytosolic">
    <location>
        <begin position="1"/>
        <end position="420"/>
    </location>
</feature>
<feature type="binding site" evidence="1">
    <location>
        <position position="23"/>
    </location>
    <ligand>
        <name>(2R)-3-phosphoglycerate</name>
        <dbReference type="ChEBI" id="CHEBI:58272"/>
    </ligand>
</feature>
<feature type="binding site" evidence="3">
    <location>
        <position position="24"/>
    </location>
    <ligand>
        <name>(2R)-3-phosphoglycerate</name>
        <dbReference type="ChEBI" id="CHEBI:58272"/>
    </ligand>
</feature>
<feature type="binding site" evidence="1">
    <location>
        <position position="25"/>
    </location>
    <ligand>
        <name>(2R)-3-phosphoglycerate</name>
        <dbReference type="ChEBI" id="CHEBI:58272"/>
    </ligand>
</feature>
<feature type="binding site" evidence="3">
    <location>
        <position position="26"/>
    </location>
    <ligand>
        <name>(2R)-3-phosphoglycerate</name>
        <dbReference type="ChEBI" id="CHEBI:58272"/>
    </ligand>
</feature>
<feature type="binding site" evidence="3">
    <location>
        <position position="39"/>
    </location>
    <ligand>
        <name>(2R)-3-phosphoglycerate</name>
        <dbReference type="ChEBI" id="CHEBI:58272"/>
    </ligand>
</feature>
<feature type="binding site" evidence="1">
    <location>
        <position position="61"/>
    </location>
    <ligand>
        <name>(2R)-3-phosphoglycerate</name>
        <dbReference type="ChEBI" id="CHEBI:58272"/>
    </ligand>
</feature>
<feature type="binding site" evidence="3">
    <location>
        <position position="62"/>
    </location>
    <ligand>
        <name>(2R)-3-phosphoglycerate</name>
        <dbReference type="ChEBI" id="CHEBI:58272"/>
    </ligand>
</feature>
<feature type="binding site" evidence="1">
    <location>
        <position position="64"/>
    </location>
    <ligand>
        <name>(2R)-3-phosphoglycerate</name>
        <dbReference type="ChEBI" id="CHEBI:58272"/>
    </ligand>
</feature>
<feature type="binding site" evidence="3">
    <location>
        <position position="65"/>
    </location>
    <ligand>
        <name>(2R)-3-phosphoglycerate</name>
        <dbReference type="ChEBI" id="CHEBI:58272"/>
    </ligand>
</feature>
<feature type="binding site" evidence="3">
    <location>
        <position position="135"/>
    </location>
    <ligand>
        <name>(2R)-3-phosphoglycerate</name>
        <dbReference type="ChEBI" id="CHEBI:58272"/>
    </ligand>
</feature>
<feature type="binding site" evidence="1">
    <location>
        <position position="171"/>
    </location>
    <ligand>
        <name>(2R)-3-phosphoglycerate</name>
        <dbReference type="ChEBI" id="CHEBI:58272"/>
    </ligand>
</feature>
<feature type="binding site" evidence="3">
    <location>
        <position position="172"/>
    </location>
    <ligand>
        <name>(2R)-3-phosphoglycerate</name>
        <dbReference type="ChEBI" id="CHEBI:58272"/>
    </ligand>
</feature>
<feature type="binding site" evidence="1">
    <location>
        <position position="217"/>
    </location>
    <ligand>
        <name>ADP</name>
        <dbReference type="ChEBI" id="CHEBI:456216"/>
    </ligand>
</feature>
<feature type="binding site" evidence="1">
    <location>
        <position position="217"/>
    </location>
    <ligand>
        <name>CDP</name>
        <dbReference type="ChEBI" id="CHEBI:58069"/>
    </ligand>
</feature>
<feature type="binding site" evidence="2">
    <location>
        <position position="218"/>
    </location>
    <ligand>
        <name>ADP</name>
        <dbReference type="ChEBI" id="CHEBI:456216"/>
    </ligand>
</feature>
<feature type="binding site" evidence="3">
    <location>
        <position position="218"/>
    </location>
    <ligand>
        <name>AMP</name>
        <dbReference type="ChEBI" id="CHEBI:456215"/>
    </ligand>
</feature>
<feature type="binding site" evidence="3">
    <location>
        <position position="218"/>
    </location>
    <ligand>
        <name>ATP</name>
        <dbReference type="ChEBI" id="CHEBI:30616"/>
    </ligand>
</feature>
<feature type="binding site" evidence="1">
    <location>
        <position position="218"/>
    </location>
    <ligand>
        <name>Mg(2+)</name>
        <dbReference type="ChEBI" id="CHEBI:18420"/>
    </ligand>
</feature>
<feature type="binding site" evidence="2">
    <location>
        <position position="219"/>
    </location>
    <ligand>
        <name>(2R)-3-phosphoglycerate</name>
        <dbReference type="ChEBI" id="CHEBI:58272"/>
    </ligand>
</feature>
<feature type="binding site" evidence="3">
    <location>
        <position position="219"/>
    </location>
    <ligand>
        <name>AMP</name>
        <dbReference type="ChEBI" id="CHEBI:456215"/>
    </ligand>
</feature>
<feature type="binding site" evidence="1">
    <location>
        <position position="222"/>
    </location>
    <ligand>
        <name>CDP</name>
        <dbReference type="ChEBI" id="CHEBI:58069"/>
    </ligand>
</feature>
<feature type="binding site" evidence="1">
    <location>
        <position position="222"/>
    </location>
    <ligand>
        <name>Mg(2+)</name>
        <dbReference type="ChEBI" id="CHEBI:18420"/>
    </ligand>
</feature>
<feature type="binding site" evidence="2">
    <location>
        <position position="223"/>
    </location>
    <ligand>
        <name>ADP</name>
        <dbReference type="ChEBI" id="CHEBI:456216"/>
    </ligand>
</feature>
<feature type="binding site" evidence="3">
    <location>
        <position position="223"/>
    </location>
    <ligand>
        <name>AMP</name>
        <dbReference type="ChEBI" id="CHEBI:456215"/>
    </ligand>
</feature>
<feature type="binding site" evidence="3">
    <location>
        <position position="223"/>
    </location>
    <ligand>
        <name>ATP</name>
        <dbReference type="ChEBI" id="CHEBI:30616"/>
    </ligand>
</feature>
<feature type="binding site" evidence="1">
    <location>
        <position position="241"/>
    </location>
    <ligand>
        <name>ADP</name>
        <dbReference type="ChEBI" id="CHEBI:456216"/>
    </ligand>
</feature>
<feature type="binding site" evidence="1">
    <location>
        <position position="241"/>
    </location>
    <ligand>
        <name>CDP</name>
        <dbReference type="ChEBI" id="CHEBI:58069"/>
    </ligand>
</feature>
<feature type="binding site" evidence="3">
    <location>
        <position position="242"/>
    </location>
    <ligand>
        <name>AMP</name>
        <dbReference type="ChEBI" id="CHEBI:456215"/>
    </ligand>
</feature>
<feature type="binding site" evidence="3">
    <location>
        <position position="242"/>
    </location>
    <ligand>
        <name>ATP</name>
        <dbReference type="ChEBI" id="CHEBI:30616"/>
    </ligand>
</feature>
<feature type="binding site" evidence="2">
    <location>
        <position position="314"/>
    </location>
    <ligand>
        <name>ADP</name>
        <dbReference type="ChEBI" id="CHEBI:456216"/>
    </ligand>
</feature>
<feature type="binding site" evidence="3">
    <location>
        <position position="314"/>
    </location>
    <ligand>
        <name>AMP</name>
        <dbReference type="ChEBI" id="CHEBI:456215"/>
    </ligand>
</feature>
<feature type="binding site" evidence="3">
    <location>
        <position position="314"/>
    </location>
    <ligand>
        <name>ATP</name>
        <dbReference type="ChEBI" id="CHEBI:30616"/>
    </ligand>
</feature>
<feature type="binding site" evidence="2">
    <location>
        <position position="338"/>
    </location>
    <ligand>
        <name>ADP</name>
        <dbReference type="ChEBI" id="CHEBI:456216"/>
    </ligand>
</feature>
<feature type="binding site" evidence="1">
    <location>
        <position position="339"/>
    </location>
    <ligand>
        <name>CDP</name>
        <dbReference type="ChEBI" id="CHEBI:58069"/>
    </ligand>
</feature>
<feature type="binding site" evidence="1">
    <location>
        <position position="344"/>
    </location>
    <ligand>
        <name>ADP</name>
        <dbReference type="ChEBI" id="CHEBI:456216"/>
    </ligand>
</feature>
<feature type="binding site" evidence="1">
    <location>
        <position position="344"/>
    </location>
    <ligand>
        <name>CDP</name>
        <dbReference type="ChEBI" id="CHEBI:58069"/>
    </ligand>
</feature>
<feature type="binding site" evidence="2">
    <location>
        <position position="345"/>
    </location>
    <ligand>
        <name>ADP</name>
        <dbReference type="ChEBI" id="CHEBI:456216"/>
    </ligand>
</feature>
<feature type="binding site" evidence="3">
    <location>
        <position position="345"/>
    </location>
    <ligand>
        <name>AMP</name>
        <dbReference type="ChEBI" id="CHEBI:456215"/>
    </ligand>
</feature>
<feature type="binding site" evidence="3">
    <location>
        <position position="345"/>
    </location>
    <ligand>
        <name>ATP</name>
        <dbReference type="ChEBI" id="CHEBI:30616"/>
    </ligand>
</feature>
<feature type="binding site" evidence="2">
    <location>
        <position position="377"/>
    </location>
    <ligand>
        <name>ADP</name>
        <dbReference type="ChEBI" id="CHEBI:456216"/>
    </ligand>
</feature>
<feature type="binding site" evidence="3">
    <location>
        <position position="377"/>
    </location>
    <ligand>
        <name>ATP</name>
        <dbReference type="ChEBI" id="CHEBI:30616"/>
    </ligand>
</feature>
<feature type="binding site" evidence="3">
    <location>
        <position position="377"/>
    </location>
    <ligand>
        <name>Mg(2+)</name>
        <dbReference type="ChEBI" id="CHEBI:18420"/>
    </ligand>
</feature>
<feature type="binding site" evidence="2">
    <location>
        <position position="378"/>
    </location>
    <ligand>
        <name>ADP</name>
        <dbReference type="ChEBI" id="CHEBI:456216"/>
    </ligand>
</feature>
<feature type="binding site" evidence="3">
    <location>
        <position position="378"/>
    </location>
    <ligand>
        <name>ATP</name>
        <dbReference type="ChEBI" id="CHEBI:30616"/>
    </ligand>
</feature>
<sequence length="420" mass="45087">MSLKERKSINECDLKGKKVLIRVDFNVPLDDGNITNDYRIRSALPAVQKVLTEGGSCVLMSHLGRPKGVSMAEGKELRSTGGIPGFEQKATLKPVAKALSELLSRPVTFAPDCLNAADVVSKMSPGDVVLLENVRFYKEEGSKSTEEREAMAKILASYGDVYISDAFGTAHRDSATMTGIPKILGHGAAGYLMEKEISYFAKVLGNPPRPLVAIVGGAKVSDKIQLLDNMLQRIDYLLIGGAMAYTFLKAQGYSIGISMCEESKLEFARSLLKKAEDRKVQVILPIDHVCHTEFKAVDSPLITEDQNIPEGHMALDIGPKTIEKYVQTIGKCKSAIWNGPMGVFEMVPYSKGTFAIAKAMGRGTHEHGLMSIIGGGESAGAAELCGEAARISHVSTGGGASLELLEGKTLPGVTVLDEKE</sequence>
<name>PGKE_TRYBB</name>
<keyword id="KW-0067">ATP-binding</keyword>
<keyword id="KW-0963">Cytoplasm</keyword>
<keyword id="KW-0324">Glycolysis</keyword>
<keyword id="KW-0418">Kinase</keyword>
<keyword id="KW-0460">Magnesium</keyword>
<keyword id="KW-0479">Metal-binding</keyword>
<keyword id="KW-0547">Nucleotide-binding</keyword>
<keyword id="KW-0808">Transferase</keyword>
<dbReference type="EC" id="2.7.2.3" evidence="1"/>
<dbReference type="EMBL" id="X05890">
    <property type="protein sequence ID" value="CAA29320.1"/>
    <property type="molecule type" value="Genomic_DNA"/>
</dbReference>
<dbReference type="PIR" id="S02234">
    <property type="entry name" value="TVUTG4"/>
</dbReference>
<dbReference type="SMR" id="P08893"/>
<dbReference type="SABIO-RK" id="P08893"/>
<dbReference type="UniPathway" id="UPA00109">
    <property type="reaction ID" value="UER00185"/>
</dbReference>
<dbReference type="GO" id="GO:0005829">
    <property type="term" value="C:cytosol"/>
    <property type="evidence" value="ECO:0007669"/>
    <property type="project" value="TreeGrafter"/>
</dbReference>
<dbReference type="GO" id="GO:0043531">
    <property type="term" value="F:ADP binding"/>
    <property type="evidence" value="ECO:0007669"/>
    <property type="project" value="TreeGrafter"/>
</dbReference>
<dbReference type="GO" id="GO:0005524">
    <property type="term" value="F:ATP binding"/>
    <property type="evidence" value="ECO:0007669"/>
    <property type="project" value="UniProtKB-KW"/>
</dbReference>
<dbReference type="GO" id="GO:0046872">
    <property type="term" value="F:metal ion binding"/>
    <property type="evidence" value="ECO:0007669"/>
    <property type="project" value="UniProtKB-KW"/>
</dbReference>
<dbReference type="GO" id="GO:0004618">
    <property type="term" value="F:phosphoglycerate kinase activity"/>
    <property type="evidence" value="ECO:0007669"/>
    <property type="project" value="UniProtKB-EC"/>
</dbReference>
<dbReference type="GO" id="GO:0006094">
    <property type="term" value="P:gluconeogenesis"/>
    <property type="evidence" value="ECO:0007669"/>
    <property type="project" value="TreeGrafter"/>
</dbReference>
<dbReference type="GO" id="GO:0006096">
    <property type="term" value="P:glycolytic process"/>
    <property type="evidence" value="ECO:0007669"/>
    <property type="project" value="UniProtKB-UniPathway"/>
</dbReference>
<dbReference type="CDD" id="cd00318">
    <property type="entry name" value="Phosphoglycerate_kinase"/>
    <property type="match status" value="1"/>
</dbReference>
<dbReference type="FunFam" id="3.40.50.1260:FF:000007">
    <property type="entry name" value="Phosphoglycerate kinase"/>
    <property type="match status" value="1"/>
</dbReference>
<dbReference type="FunFam" id="3.40.50.1260:FF:000011">
    <property type="entry name" value="Phosphoglycerate kinase"/>
    <property type="match status" value="1"/>
</dbReference>
<dbReference type="Gene3D" id="3.40.50.1260">
    <property type="entry name" value="Phosphoglycerate kinase, N-terminal domain"/>
    <property type="match status" value="2"/>
</dbReference>
<dbReference type="HAMAP" id="MF_00145">
    <property type="entry name" value="Phosphoglyc_kinase"/>
    <property type="match status" value="1"/>
</dbReference>
<dbReference type="InterPro" id="IPR027250">
    <property type="entry name" value="Pgk_euglenozoa"/>
</dbReference>
<dbReference type="InterPro" id="IPR001576">
    <property type="entry name" value="Phosphoglycerate_kinase"/>
</dbReference>
<dbReference type="InterPro" id="IPR015911">
    <property type="entry name" value="Phosphoglycerate_kinase_CS"/>
</dbReference>
<dbReference type="InterPro" id="IPR015824">
    <property type="entry name" value="Phosphoglycerate_kinase_N"/>
</dbReference>
<dbReference type="InterPro" id="IPR036043">
    <property type="entry name" value="Phosphoglycerate_kinase_sf"/>
</dbReference>
<dbReference type="PANTHER" id="PTHR11406">
    <property type="entry name" value="PHOSPHOGLYCERATE KINASE"/>
    <property type="match status" value="1"/>
</dbReference>
<dbReference type="PANTHER" id="PTHR11406:SF23">
    <property type="entry name" value="PHOSPHOGLYCERATE KINASE 1, CHLOROPLASTIC-RELATED"/>
    <property type="match status" value="1"/>
</dbReference>
<dbReference type="Pfam" id="PF00162">
    <property type="entry name" value="PGK"/>
    <property type="match status" value="1"/>
</dbReference>
<dbReference type="PIRSF" id="PIRSF000724">
    <property type="entry name" value="Pgk"/>
    <property type="match status" value="1"/>
</dbReference>
<dbReference type="PIRSF" id="PIRSF500126">
    <property type="entry name" value="Pgk_euglenozoa"/>
    <property type="match status" value="1"/>
</dbReference>
<dbReference type="PRINTS" id="PR00477">
    <property type="entry name" value="PHGLYCKINASE"/>
</dbReference>
<dbReference type="SUPFAM" id="SSF53748">
    <property type="entry name" value="Phosphoglycerate kinase"/>
    <property type="match status" value="1"/>
</dbReference>
<dbReference type="PROSITE" id="PS00111">
    <property type="entry name" value="PGLYCERATE_KINASE"/>
    <property type="match status" value="1"/>
</dbReference>